<protein>
    <recommendedName>
        <fullName>NADH-ubiquinone oxidoreductase chain 5</fullName>
        <ecNumber>7.1.1.2</ecNumber>
    </recommendedName>
    <alternativeName>
        <fullName>NADH dehydrogenase subunit 5</fullName>
    </alternativeName>
</protein>
<sequence length="598" mass="67079">MNSHYLTLIMNSGALLTIIVLLPPIIMPKPSMILTTKLVKISMFISLIPLTIYLNENMETTLTMKPWMDWALFNIALSFKIDKYTVIFTPIALMITWSIMEFSQWYMAKERHMDKFFKYLLLFLITMITFISANNLLQLFIGWEGVGIMSFLLISWWSGRTKANISALQAVAYNRIGDIGLMMSMVWMCSNTNSWDLQQITMLLSDQQYLIPTLGFLIAATGKSAQFGLHPWLPAAMEGPTPVSALLHSSTMVVAGVFLLIRLHPLFQNYPLMLEMTLCLGAMTTICAALCATTQNDIKKIIAFSTSSQLGLMMVAVGLNHPHIAFLHMCTHAFFKAMLFLCSGSIIHNMNNEQDIRKFSCLNNNLPLTTTCMTIGSAALMGLPFLAGFFTKDLILEALNTSYTNAWALMVTLMAVTLTTAYSSRLIIMSASGTPRYLPLTPTHENNFIKNPLKRLAWGSLISGLILTSTLPPMKPQIFTMPTYIKTIALMMFIISLIISMELTNKKINQTTFSFFTQLAFYPHIIHRLTSHLSLIWSQKLMTQVMDVSWLEKIGPKGLANHQLKPSTTLTEAHHLNSATLPLMAFALTLITLSLTAR</sequence>
<accession>Q35543</accession>
<dbReference type="EC" id="7.1.1.2"/>
<dbReference type="EMBL" id="U11880">
    <property type="protein sequence ID" value="AAB08748.1"/>
    <property type="molecule type" value="Genomic_DNA"/>
</dbReference>
<dbReference type="PIR" id="S55014">
    <property type="entry name" value="S55014"/>
</dbReference>
<dbReference type="RefSeq" id="NP_008158.1">
    <property type="nucleotide sequence ID" value="NC_001626.1"/>
</dbReference>
<dbReference type="SMR" id="Q35543"/>
<dbReference type="STRING" id="7757.ENSPMAP00000011441"/>
<dbReference type="Ensembl" id="ENSPMAT00000014138.1">
    <property type="protein sequence ID" value="ENSPMAP00000011441.1"/>
    <property type="gene ID" value="ENSPMAG00000013111.1"/>
</dbReference>
<dbReference type="GeneID" id="807813"/>
<dbReference type="KEGG" id="pmrn:807813"/>
<dbReference type="CTD" id="4540"/>
<dbReference type="GeneTree" id="ENSGT00730000111303"/>
<dbReference type="HOGENOM" id="CLU_007100_6_0_1"/>
<dbReference type="OMA" id="GVGIMSF"/>
<dbReference type="OrthoDB" id="10069788at2759"/>
<dbReference type="Proteomes" id="UP001318040">
    <property type="component" value="Mitochondrion MT"/>
</dbReference>
<dbReference type="GO" id="GO:0005743">
    <property type="term" value="C:mitochondrial inner membrane"/>
    <property type="evidence" value="ECO:0007669"/>
    <property type="project" value="UniProtKB-SubCell"/>
</dbReference>
<dbReference type="GO" id="GO:0008137">
    <property type="term" value="F:NADH dehydrogenase (ubiquinone) activity"/>
    <property type="evidence" value="ECO:0007669"/>
    <property type="project" value="UniProtKB-EC"/>
</dbReference>
<dbReference type="GO" id="GO:0042773">
    <property type="term" value="P:ATP synthesis coupled electron transport"/>
    <property type="evidence" value="ECO:0007669"/>
    <property type="project" value="InterPro"/>
</dbReference>
<dbReference type="GO" id="GO:0015990">
    <property type="term" value="P:electron transport coupled proton transport"/>
    <property type="evidence" value="ECO:0007669"/>
    <property type="project" value="TreeGrafter"/>
</dbReference>
<dbReference type="InterPro" id="IPR010934">
    <property type="entry name" value="NADH_DH_su5_C"/>
</dbReference>
<dbReference type="InterPro" id="IPR018393">
    <property type="entry name" value="NADHpl_OxRdtase_5_subgr"/>
</dbReference>
<dbReference type="InterPro" id="IPR001750">
    <property type="entry name" value="ND/Mrp_TM"/>
</dbReference>
<dbReference type="InterPro" id="IPR003945">
    <property type="entry name" value="NU5C-like"/>
</dbReference>
<dbReference type="InterPro" id="IPR001516">
    <property type="entry name" value="Proton_antipo_N"/>
</dbReference>
<dbReference type="NCBIfam" id="TIGR01974">
    <property type="entry name" value="NDH_I_L"/>
    <property type="match status" value="1"/>
</dbReference>
<dbReference type="PANTHER" id="PTHR42829">
    <property type="entry name" value="NADH-UBIQUINONE OXIDOREDUCTASE CHAIN 5"/>
    <property type="match status" value="1"/>
</dbReference>
<dbReference type="PANTHER" id="PTHR42829:SF2">
    <property type="entry name" value="NADH-UBIQUINONE OXIDOREDUCTASE CHAIN 5"/>
    <property type="match status" value="1"/>
</dbReference>
<dbReference type="Pfam" id="PF06455">
    <property type="entry name" value="NADH5_C"/>
    <property type="match status" value="1"/>
</dbReference>
<dbReference type="Pfam" id="PF00361">
    <property type="entry name" value="Proton_antipo_M"/>
    <property type="match status" value="1"/>
</dbReference>
<dbReference type="Pfam" id="PF00662">
    <property type="entry name" value="Proton_antipo_N"/>
    <property type="match status" value="1"/>
</dbReference>
<dbReference type="PRINTS" id="PR01434">
    <property type="entry name" value="NADHDHGNASE5"/>
</dbReference>
<organism>
    <name type="scientific">Petromyzon marinus</name>
    <name type="common">Sea lamprey</name>
    <dbReference type="NCBI Taxonomy" id="7757"/>
    <lineage>
        <taxon>Eukaryota</taxon>
        <taxon>Metazoa</taxon>
        <taxon>Chordata</taxon>
        <taxon>Craniata</taxon>
        <taxon>Vertebrata</taxon>
        <taxon>Cyclostomata</taxon>
        <taxon>Hyperoartia</taxon>
        <taxon>Petromyzontiformes</taxon>
        <taxon>Petromyzontidae</taxon>
        <taxon>Petromyzon</taxon>
    </lineage>
</organism>
<proteinExistence type="inferred from homology"/>
<reference key="1">
    <citation type="journal article" date="1995" name="Genetics">
        <title>Complete sequence of a sea lamprey (Petromyzon marinus) mitochondrial genome: early establishment of the vertebrate genome organization.</title>
        <authorList>
            <person name="Lee W.J."/>
            <person name="Kocher T.D."/>
        </authorList>
    </citation>
    <scope>NUCLEOTIDE SEQUENCE [GENOMIC DNA]</scope>
</reference>
<gene>
    <name type="primary">MT-ND5</name>
    <name type="synonym">MTND5</name>
    <name type="synonym">NADH5</name>
    <name type="synonym">ND5</name>
</gene>
<comment type="function">
    <text evidence="1">Core subunit of the mitochondrial membrane respiratory chain NADH dehydrogenase (Complex I) that is believed to belong to the minimal assembly required for catalysis. Complex I functions in the transfer of electrons from NADH to the respiratory chain. The immediate electron acceptor for the enzyme is believed to be ubiquinone (By similarity).</text>
</comment>
<comment type="catalytic activity">
    <reaction>
        <text>a ubiquinone + NADH + 5 H(+)(in) = a ubiquinol + NAD(+) + 4 H(+)(out)</text>
        <dbReference type="Rhea" id="RHEA:29091"/>
        <dbReference type="Rhea" id="RHEA-COMP:9565"/>
        <dbReference type="Rhea" id="RHEA-COMP:9566"/>
        <dbReference type="ChEBI" id="CHEBI:15378"/>
        <dbReference type="ChEBI" id="CHEBI:16389"/>
        <dbReference type="ChEBI" id="CHEBI:17976"/>
        <dbReference type="ChEBI" id="CHEBI:57540"/>
        <dbReference type="ChEBI" id="CHEBI:57945"/>
        <dbReference type="EC" id="7.1.1.2"/>
    </reaction>
</comment>
<comment type="subcellular location">
    <subcellularLocation>
        <location evidence="1">Mitochondrion inner membrane</location>
        <topology evidence="1">Multi-pass membrane protein</topology>
    </subcellularLocation>
</comment>
<comment type="similarity">
    <text evidence="3">Belongs to the complex I subunit 5 family.</text>
</comment>
<evidence type="ECO:0000250" key="1"/>
<evidence type="ECO:0000255" key="2"/>
<evidence type="ECO:0000305" key="3"/>
<feature type="chain" id="PRO_0000118130" description="NADH-ubiquinone oxidoreductase chain 5">
    <location>
        <begin position="1"/>
        <end position="598"/>
    </location>
</feature>
<feature type="transmembrane region" description="Helical" evidence="2">
    <location>
        <begin position="6"/>
        <end position="26"/>
    </location>
</feature>
<feature type="transmembrane region" description="Helical" evidence="2">
    <location>
        <begin position="32"/>
        <end position="52"/>
    </location>
</feature>
<feature type="transmembrane region" description="Helical" evidence="2">
    <location>
        <begin position="84"/>
        <end position="100"/>
    </location>
</feature>
<feature type="transmembrane region" description="Helical" evidence="2">
    <location>
        <begin position="113"/>
        <end position="133"/>
    </location>
</feature>
<feature type="transmembrane region" description="Helical" evidence="2">
    <location>
        <begin position="136"/>
        <end position="156"/>
    </location>
</feature>
<feature type="transmembrane region" description="Helical" evidence="2">
    <location>
        <begin position="241"/>
        <end position="261"/>
    </location>
</feature>
<feature type="transmembrane region" description="Helical" evidence="2">
    <location>
        <begin position="272"/>
        <end position="292"/>
    </location>
</feature>
<feature type="transmembrane region" description="Helical" evidence="2">
    <location>
        <begin position="301"/>
        <end position="320"/>
    </location>
</feature>
<feature type="transmembrane region" description="Helical" evidence="2">
    <location>
        <begin position="325"/>
        <end position="347"/>
    </location>
</feature>
<feature type="transmembrane region" description="Helical" evidence="2">
    <location>
        <begin position="370"/>
        <end position="390"/>
    </location>
</feature>
<feature type="transmembrane region" description="Helical" evidence="2">
    <location>
        <begin position="409"/>
        <end position="429"/>
    </location>
</feature>
<feature type="transmembrane region" description="Helical" evidence="2">
    <location>
        <begin position="456"/>
        <end position="476"/>
    </location>
</feature>
<feature type="transmembrane region" description="Helical" evidence="2">
    <location>
        <begin position="478"/>
        <end position="498"/>
    </location>
</feature>
<feature type="transmembrane region" description="Helical" evidence="2">
    <location>
        <begin position="576"/>
        <end position="596"/>
    </location>
</feature>
<geneLocation type="mitochondrion"/>
<keyword id="KW-0249">Electron transport</keyword>
<keyword id="KW-0472">Membrane</keyword>
<keyword id="KW-0496">Mitochondrion</keyword>
<keyword id="KW-0999">Mitochondrion inner membrane</keyword>
<keyword id="KW-0520">NAD</keyword>
<keyword id="KW-0679">Respiratory chain</keyword>
<keyword id="KW-1278">Translocase</keyword>
<keyword id="KW-0812">Transmembrane</keyword>
<keyword id="KW-1133">Transmembrane helix</keyword>
<keyword id="KW-0813">Transport</keyword>
<keyword id="KW-0830">Ubiquinone</keyword>
<name>NU5M_PETMA</name>